<keyword id="KW-0489">Methyltransferase</keyword>
<keyword id="KW-0949">S-adenosyl-L-methionine</keyword>
<keyword id="KW-0808">Transferase</keyword>
<keyword id="KW-0819">tRNA processing</keyword>
<feature type="chain" id="PRO_0000388567" description="tRNA/tmRNA (uracil-C(5))-methyltransferase">
    <location>
        <begin position="1"/>
        <end position="365"/>
    </location>
</feature>
<feature type="active site" description="Nucleophile" evidence="1">
    <location>
        <position position="323"/>
    </location>
</feature>
<feature type="active site" description="Proton acceptor" evidence="1">
    <location>
        <position position="357"/>
    </location>
</feature>
<feature type="binding site" evidence="1">
    <location>
        <position position="189"/>
    </location>
    <ligand>
        <name>S-adenosyl-L-methionine</name>
        <dbReference type="ChEBI" id="CHEBI:59789"/>
    </ligand>
</feature>
<feature type="binding site" evidence="1">
    <location>
        <position position="217"/>
    </location>
    <ligand>
        <name>S-adenosyl-L-methionine</name>
        <dbReference type="ChEBI" id="CHEBI:59789"/>
    </ligand>
</feature>
<feature type="binding site" evidence="1">
    <location>
        <position position="222"/>
    </location>
    <ligand>
        <name>S-adenosyl-L-methionine</name>
        <dbReference type="ChEBI" id="CHEBI:59789"/>
    </ligand>
</feature>
<feature type="binding site" evidence="1">
    <location>
        <position position="238"/>
    </location>
    <ligand>
        <name>S-adenosyl-L-methionine</name>
        <dbReference type="ChEBI" id="CHEBI:59789"/>
    </ligand>
</feature>
<feature type="binding site" evidence="1">
    <location>
        <position position="298"/>
    </location>
    <ligand>
        <name>S-adenosyl-L-methionine</name>
        <dbReference type="ChEBI" id="CHEBI:59789"/>
    </ligand>
</feature>
<reference key="1">
    <citation type="submission" date="2006-12" db="EMBL/GenBank/DDBJ databases">
        <title>Complete sequence of Shewanella sp. W3-18-1.</title>
        <authorList>
            <consortium name="US DOE Joint Genome Institute"/>
            <person name="Copeland A."/>
            <person name="Lucas S."/>
            <person name="Lapidus A."/>
            <person name="Barry K."/>
            <person name="Detter J.C."/>
            <person name="Glavina del Rio T."/>
            <person name="Hammon N."/>
            <person name="Israni S."/>
            <person name="Dalin E."/>
            <person name="Tice H."/>
            <person name="Pitluck S."/>
            <person name="Chain P."/>
            <person name="Malfatti S."/>
            <person name="Shin M."/>
            <person name="Vergez L."/>
            <person name="Schmutz J."/>
            <person name="Larimer F."/>
            <person name="Land M."/>
            <person name="Hauser L."/>
            <person name="Kyrpides N."/>
            <person name="Lykidis A."/>
            <person name="Tiedje J."/>
            <person name="Richardson P."/>
        </authorList>
    </citation>
    <scope>NUCLEOTIDE SEQUENCE [LARGE SCALE GENOMIC DNA]</scope>
    <source>
        <strain>W3-18-1</strain>
    </source>
</reference>
<accession>A1RP91</accession>
<organism>
    <name type="scientific">Shewanella sp. (strain W3-18-1)</name>
    <dbReference type="NCBI Taxonomy" id="351745"/>
    <lineage>
        <taxon>Bacteria</taxon>
        <taxon>Pseudomonadati</taxon>
        <taxon>Pseudomonadota</taxon>
        <taxon>Gammaproteobacteria</taxon>
        <taxon>Alteromonadales</taxon>
        <taxon>Shewanellaceae</taxon>
        <taxon>Shewanella</taxon>
    </lineage>
</organism>
<sequence>MNLAAMDPQTYDAQLEHKRIKLEQAFAQFETPSVEVFASEPANYRMRAEFRMWHDGDDLYYYMFDKVLNEKVRCDQYLPASVLINQMMSALIAELKPNPSLRHKLFQVDFLSTLSGEILVSLLYHRQLDDQWRTNAAALKAKLSSQFNVNIIGRARKQKIDLDKDFVVESLQVNDKTFLYKQIENSFTQPNAKVAVKMLEWAIDVTQDSQGDLLELYCGNGNFSIALAQNFNRVLATELAKPSVEAAQYNIEANGIKNLQIIRMSAEDFSDAMAKKRSFRRLEGIDLDSYVCNTIFVDPPRAGIDPDTLALVQGYERILYISCNPDTLKDNLEQLYKTHRVTQFALFDQFPYTDHMETGVLLERR</sequence>
<gene>
    <name evidence="1" type="primary">trmA</name>
    <name type="ordered locus">Sputw3181_3677</name>
</gene>
<name>TRMA_SHESW</name>
<protein>
    <recommendedName>
        <fullName evidence="1">tRNA/tmRNA (uracil-C(5))-methyltransferase</fullName>
        <ecNumber evidence="1">2.1.1.-</ecNumber>
        <ecNumber evidence="1">2.1.1.35</ecNumber>
    </recommendedName>
    <alternativeName>
        <fullName evidence="1">tRNA (uracil(54)-C(5))-methyltransferase</fullName>
    </alternativeName>
    <alternativeName>
        <fullName evidence="1">tRNA(m5U54)-methyltransferase</fullName>
        <shortName evidence="1">RUMT</shortName>
    </alternativeName>
    <alternativeName>
        <fullName evidence="1">tmRNA (uracil(341)-C(5))-methyltransferase</fullName>
    </alternativeName>
</protein>
<evidence type="ECO:0000255" key="1">
    <source>
        <dbReference type="HAMAP-Rule" id="MF_01011"/>
    </source>
</evidence>
<dbReference type="EC" id="2.1.1.-" evidence="1"/>
<dbReference type="EC" id="2.1.1.35" evidence="1"/>
<dbReference type="EMBL" id="CP000503">
    <property type="protein sequence ID" value="ABM26486.1"/>
    <property type="molecule type" value="Genomic_DNA"/>
</dbReference>
<dbReference type="RefSeq" id="WP_011790917.1">
    <property type="nucleotide sequence ID" value="NC_008750.1"/>
</dbReference>
<dbReference type="SMR" id="A1RP91"/>
<dbReference type="KEGG" id="shw:Sputw3181_3677"/>
<dbReference type="HOGENOM" id="CLU_043022_0_0_6"/>
<dbReference type="Proteomes" id="UP000002597">
    <property type="component" value="Chromosome"/>
</dbReference>
<dbReference type="GO" id="GO:0005829">
    <property type="term" value="C:cytosol"/>
    <property type="evidence" value="ECO:0007669"/>
    <property type="project" value="TreeGrafter"/>
</dbReference>
<dbReference type="GO" id="GO:0019843">
    <property type="term" value="F:rRNA binding"/>
    <property type="evidence" value="ECO:0007669"/>
    <property type="project" value="TreeGrafter"/>
</dbReference>
<dbReference type="GO" id="GO:0030697">
    <property type="term" value="F:tRNA (uracil(54)-C5)-methyltransferase activity, S-adenosyl methionine-dependent"/>
    <property type="evidence" value="ECO:0007669"/>
    <property type="project" value="UniProtKB-UniRule"/>
</dbReference>
<dbReference type="GO" id="GO:0000049">
    <property type="term" value="F:tRNA binding"/>
    <property type="evidence" value="ECO:0007669"/>
    <property type="project" value="TreeGrafter"/>
</dbReference>
<dbReference type="GO" id="GO:0030488">
    <property type="term" value="P:tRNA methylation"/>
    <property type="evidence" value="ECO:0007669"/>
    <property type="project" value="UniProtKB-UniRule"/>
</dbReference>
<dbReference type="CDD" id="cd02440">
    <property type="entry name" value="AdoMet_MTases"/>
    <property type="match status" value="1"/>
</dbReference>
<dbReference type="FunFam" id="2.40.50.1070:FF:000001">
    <property type="entry name" value="tRNA/tmRNA (uracil-C(5))-methyltransferase"/>
    <property type="match status" value="1"/>
</dbReference>
<dbReference type="FunFam" id="3.40.50.150:FF:000012">
    <property type="entry name" value="tRNA/tmRNA (uracil-C(5))-methyltransferase"/>
    <property type="match status" value="1"/>
</dbReference>
<dbReference type="Gene3D" id="2.40.50.1070">
    <property type="match status" value="1"/>
</dbReference>
<dbReference type="Gene3D" id="3.40.50.150">
    <property type="entry name" value="Vaccinia Virus protein VP39"/>
    <property type="match status" value="1"/>
</dbReference>
<dbReference type="HAMAP" id="MF_01011">
    <property type="entry name" value="RNA_methyltr_TrmA"/>
    <property type="match status" value="1"/>
</dbReference>
<dbReference type="InterPro" id="IPR030390">
    <property type="entry name" value="MeTrfase_TrmA_AS"/>
</dbReference>
<dbReference type="InterPro" id="IPR030391">
    <property type="entry name" value="MeTrfase_TrmA_CS"/>
</dbReference>
<dbReference type="InterPro" id="IPR029063">
    <property type="entry name" value="SAM-dependent_MTases_sf"/>
</dbReference>
<dbReference type="InterPro" id="IPR011869">
    <property type="entry name" value="TrmA_MeTrfase"/>
</dbReference>
<dbReference type="InterPro" id="IPR010280">
    <property type="entry name" value="U5_MeTrfase_fam"/>
</dbReference>
<dbReference type="NCBIfam" id="TIGR02143">
    <property type="entry name" value="trmA_only"/>
    <property type="match status" value="1"/>
</dbReference>
<dbReference type="PANTHER" id="PTHR47790">
    <property type="entry name" value="TRNA/TMRNA (URACIL-C(5))-METHYLTRANSFERASE"/>
    <property type="match status" value="1"/>
</dbReference>
<dbReference type="PANTHER" id="PTHR47790:SF2">
    <property type="entry name" value="TRNA_TMRNA (URACIL-C(5))-METHYLTRANSFERASE"/>
    <property type="match status" value="1"/>
</dbReference>
<dbReference type="Pfam" id="PF05958">
    <property type="entry name" value="tRNA_U5-meth_tr"/>
    <property type="match status" value="1"/>
</dbReference>
<dbReference type="SUPFAM" id="SSF53335">
    <property type="entry name" value="S-adenosyl-L-methionine-dependent methyltransferases"/>
    <property type="match status" value="1"/>
</dbReference>
<dbReference type="PROSITE" id="PS51687">
    <property type="entry name" value="SAM_MT_RNA_M5U"/>
    <property type="match status" value="1"/>
</dbReference>
<dbReference type="PROSITE" id="PS01230">
    <property type="entry name" value="TRMA_1"/>
    <property type="match status" value="1"/>
</dbReference>
<dbReference type="PROSITE" id="PS01231">
    <property type="entry name" value="TRMA_2"/>
    <property type="match status" value="1"/>
</dbReference>
<proteinExistence type="inferred from homology"/>
<comment type="function">
    <text evidence="1">Dual-specificity methyltransferase that catalyzes the formation of 5-methyluridine at position 54 (m5U54) in all tRNAs, and that of position 341 (m5U341) in tmRNA (transfer-mRNA).</text>
</comment>
<comment type="catalytic activity">
    <reaction evidence="1">
        <text>uridine(54) in tRNA + S-adenosyl-L-methionine = 5-methyluridine(54) in tRNA + S-adenosyl-L-homocysteine + H(+)</text>
        <dbReference type="Rhea" id="RHEA:42712"/>
        <dbReference type="Rhea" id="RHEA-COMP:10167"/>
        <dbReference type="Rhea" id="RHEA-COMP:10193"/>
        <dbReference type="ChEBI" id="CHEBI:15378"/>
        <dbReference type="ChEBI" id="CHEBI:57856"/>
        <dbReference type="ChEBI" id="CHEBI:59789"/>
        <dbReference type="ChEBI" id="CHEBI:65315"/>
        <dbReference type="ChEBI" id="CHEBI:74447"/>
        <dbReference type="EC" id="2.1.1.35"/>
    </reaction>
</comment>
<comment type="catalytic activity">
    <reaction evidence="1">
        <text>uridine(341) in tmRNA + S-adenosyl-L-methionine = 5-methyluridine(341) in tmRNA + S-adenosyl-L-homocysteine + H(+)</text>
        <dbReference type="Rhea" id="RHEA:43612"/>
        <dbReference type="Rhea" id="RHEA-COMP:10630"/>
        <dbReference type="Rhea" id="RHEA-COMP:10631"/>
        <dbReference type="ChEBI" id="CHEBI:15378"/>
        <dbReference type="ChEBI" id="CHEBI:57856"/>
        <dbReference type="ChEBI" id="CHEBI:59789"/>
        <dbReference type="ChEBI" id="CHEBI:65315"/>
        <dbReference type="ChEBI" id="CHEBI:74447"/>
    </reaction>
</comment>
<comment type="similarity">
    <text evidence="1">Belongs to the class I-like SAM-binding methyltransferase superfamily. RNA M5U methyltransferase family. TrmA subfamily.</text>
</comment>